<sequence>MDATVTVVGNLTADPELRYTATGAAVVNMTIASTPRMYDRQSGEWKDGEPLFLRGILWREYAINAAASLAKGMRVVAVGKLKQRNYETREGDRRTSVELEIDEIGPTLRYATAKCSRATQAGHGVSPDPWADSQGSQGIDSHTTRSEEITENAKNGEGAGKNELNKKVLVGDNVSYEDFDSDEVPF</sequence>
<gene>
    <name type="primary">ssb1</name>
    <name type="ordered locus">TWT_107</name>
</gene>
<proteinExistence type="inferred from homology"/>
<protein>
    <recommendedName>
        <fullName evidence="1">Single-stranded DNA-binding protein 1</fullName>
        <shortName evidence="1">SSB 1</shortName>
    </recommendedName>
</protein>
<comment type="subunit">
    <text evidence="1">Homotetramer.</text>
</comment>
<accession>Q83N34</accession>
<evidence type="ECO:0000255" key="1">
    <source>
        <dbReference type="HAMAP-Rule" id="MF_00984"/>
    </source>
</evidence>
<evidence type="ECO:0000256" key="2">
    <source>
        <dbReference type="SAM" id="MobiDB-lite"/>
    </source>
</evidence>
<organism>
    <name type="scientific">Tropheryma whipplei (strain Twist)</name>
    <name type="common">Whipple's bacillus</name>
    <dbReference type="NCBI Taxonomy" id="203267"/>
    <lineage>
        <taxon>Bacteria</taxon>
        <taxon>Bacillati</taxon>
        <taxon>Actinomycetota</taxon>
        <taxon>Actinomycetes</taxon>
        <taxon>Micrococcales</taxon>
        <taxon>Tropherymataceae</taxon>
        <taxon>Tropheryma</taxon>
    </lineage>
</organism>
<dbReference type="EMBL" id="AE014184">
    <property type="protein sequence ID" value="AAO44204.1"/>
    <property type="molecule type" value="Genomic_DNA"/>
</dbReference>
<dbReference type="RefSeq" id="WP_011102355.1">
    <property type="nucleotide sequence ID" value="NC_004572.3"/>
</dbReference>
<dbReference type="SMR" id="Q83N34"/>
<dbReference type="STRING" id="203267.TWT_107"/>
<dbReference type="KEGG" id="twh:TWT_107"/>
<dbReference type="eggNOG" id="COG0629">
    <property type="taxonomic scope" value="Bacteria"/>
</dbReference>
<dbReference type="HOGENOM" id="CLU_078758_1_0_11"/>
<dbReference type="OrthoDB" id="9809878at2"/>
<dbReference type="Proteomes" id="UP000002200">
    <property type="component" value="Chromosome"/>
</dbReference>
<dbReference type="GO" id="GO:0003697">
    <property type="term" value="F:single-stranded DNA binding"/>
    <property type="evidence" value="ECO:0007669"/>
    <property type="project" value="UniProtKB-UniRule"/>
</dbReference>
<dbReference type="GO" id="GO:0006260">
    <property type="term" value="P:DNA replication"/>
    <property type="evidence" value="ECO:0007669"/>
    <property type="project" value="InterPro"/>
</dbReference>
<dbReference type="CDD" id="cd04496">
    <property type="entry name" value="SSB_OBF"/>
    <property type="match status" value="1"/>
</dbReference>
<dbReference type="Gene3D" id="2.40.50.140">
    <property type="entry name" value="Nucleic acid-binding proteins"/>
    <property type="match status" value="1"/>
</dbReference>
<dbReference type="HAMAP" id="MF_00984">
    <property type="entry name" value="SSB"/>
    <property type="match status" value="1"/>
</dbReference>
<dbReference type="InterPro" id="IPR012340">
    <property type="entry name" value="NA-bd_OB-fold"/>
</dbReference>
<dbReference type="InterPro" id="IPR000424">
    <property type="entry name" value="Primosome_PriB/ssb"/>
</dbReference>
<dbReference type="InterPro" id="IPR011344">
    <property type="entry name" value="ssDNA-bd"/>
</dbReference>
<dbReference type="NCBIfam" id="NF005851">
    <property type="entry name" value="PRK07772.1"/>
    <property type="match status" value="1"/>
</dbReference>
<dbReference type="NCBIfam" id="TIGR00621">
    <property type="entry name" value="ssb"/>
    <property type="match status" value="1"/>
</dbReference>
<dbReference type="Pfam" id="PF00436">
    <property type="entry name" value="SSB"/>
    <property type="match status" value="1"/>
</dbReference>
<dbReference type="PIRSF" id="PIRSF002070">
    <property type="entry name" value="SSB"/>
    <property type="match status" value="1"/>
</dbReference>
<dbReference type="SUPFAM" id="SSF50249">
    <property type="entry name" value="Nucleic acid-binding proteins"/>
    <property type="match status" value="1"/>
</dbReference>
<dbReference type="PROSITE" id="PS50935">
    <property type="entry name" value="SSB"/>
    <property type="match status" value="1"/>
</dbReference>
<reference key="1">
    <citation type="journal article" date="2003" name="Genome Res.">
        <title>Tropheryma whipplei twist: a human pathogenic Actinobacteria with a reduced genome.</title>
        <authorList>
            <person name="Raoult D."/>
            <person name="Ogata H."/>
            <person name="Audic S."/>
            <person name="Robert C."/>
            <person name="Suhre K."/>
            <person name="Drancourt M."/>
            <person name="Claverie J.-M."/>
        </authorList>
    </citation>
    <scope>NUCLEOTIDE SEQUENCE [LARGE SCALE GENOMIC DNA]</scope>
    <source>
        <strain>Twist</strain>
    </source>
</reference>
<feature type="chain" id="PRO_0000096131" description="Single-stranded DNA-binding protein 1">
    <location>
        <begin position="1"/>
        <end position="186"/>
    </location>
</feature>
<feature type="domain" description="SSB" evidence="1">
    <location>
        <begin position="1"/>
        <end position="108"/>
    </location>
</feature>
<feature type="region of interest" description="Disordered" evidence="2">
    <location>
        <begin position="119"/>
        <end position="186"/>
    </location>
</feature>
<feature type="compositionally biased region" description="Acidic residues" evidence="2">
    <location>
        <begin position="175"/>
        <end position="186"/>
    </location>
</feature>
<keyword id="KW-0238">DNA-binding</keyword>
<keyword id="KW-1185">Reference proteome</keyword>
<name>SSB1_TROWT</name>